<sequence length="112" mass="12259">MKLVTVIIKPFKLEDVREALSSIGIQGLTVTEVKGFGRQKGHAELYRGAEYSVNFLPKVKIDVAIADDQLDEVIDIVSKAAYTGKIGDGKIFVAELQRVIRIRTGEADEAAL</sequence>
<reference key="1">
    <citation type="journal article" date="2001" name="Nature">
        <title>Genome sequence of enterohaemorrhagic Escherichia coli O157:H7.</title>
        <authorList>
            <person name="Perna N.T."/>
            <person name="Plunkett G. III"/>
            <person name="Burland V."/>
            <person name="Mau B."/>
            <person name="Glasner J.D."/>
            <person name="Rose D.J."/>
            <person name="Mayhew G.F."/>
            <person name="Evans P.S."/>
            <person name="Gregor J."/>
            <person name="Kirkpatrick H.A."/>
            <person name="Posfai G."/>
            <person name="Hackett J."/>
            <person name="Klink S."/>
            <person name="Boutin A."/>
            <person name="Shao Y."/>
            <person name="Miller L."/>
            <person name="Grotbeck E.J."/>
            <person name="Davis N.W."/>
            <person name="Lim A."/>
            <person name="Dimalanta E.T."/>
            <person name="Potamousis K."/>
            <person name="Apodaca J."/>
            <person name="Anantharaman T.S."/>
            <person name="Lin J."/>
            <person name="Yen G."/>
            <person name="Schwartz D.C."/>
            <person name="Welch R.A."/>
            <person name="Blattner F.R."/>
        </authorList>
    </citation>
    <scope>NUCLEOTIDE SEQUENCE [LARGE SCALE GENOMIC DNA]</scope>
    <source>
        <strain>O157:H7 / EDL933 / ATCC 700927 / EHEC</strain>
    </source>
</reference>
<reference key="2">
    <citation type="journal article" date="2001" name="DNA Res.">
        <title>Complete genome sequence of enterohemorrhagic Escherichia coli O157:H7 and genomic comparison with a laboratory strain K-12.</title>
        <authorList>
            <person name="Hayashi T."/>
            <person name="Makino K."/>
            <person name="Ohnishi M."/>
            <person name="Kurokawa K."/>
            <person name="Ishii K."/>
            <person name="Yokoyama K."/>
            <person name="Han C.-G."/>
            <person name="Ohtsubo E."/>
            <person name="Nakayama K."/>
            <person name="Murata T."/>
            <person name="Tanaka M."/>
            <person name="Tobe T."/>
            <person name="Iida T."/>
            <person name="Takami H."/>
            <person name="Honda T."/>
            <person name="Sasakawa C."/>
            <person name="Ogasawara N."/>
            <person name="Yasunaga T."/>
            <person name="Kuhara S."/>
            <person name="Shiba T."/>
            <person name="Hattori M."/>
            <person name="Shinagawa H."/>
        </authorList>
    </citation>
    <scope>NUCLEOTIDE SEQUENCE [LARGE SCALE GENOMIC DNA]</scope>
    <source>
        <strain>O157:H7 / Sakai / RIMD 0509952 / EHEC</strain>
    </source>
</reference>
<evidence type="ECO:0000250" key="1">
    <source>
        <dbReference type="UniProtKB" id="P0AC55"/>
    </source>
</evidence>
<evidence type="ECO:0000255" key="2">
    <source>
        <dbReference type="PROSITE-ProRule" id="PRU00675"/>
    </source>
</evidence>
<keyword id="KW-0067">ATP-binding</keyword>
<keyword id="KW-0997">Cell inner membrane</keyword>
<keyword id="KW-1003">Cell membrane</keyword>
<keyword id="KW-0963">Cytoplasm</keyword>
<keyword id="KW-0472">Membrane</keyword>
<keyword id="KW-0547">Nucleotide-binding</keyword>
<keyword id="KW-0597">Phosphoprotein</keyword>
<keyword id="KW-1185">Reference proteome</keyword>
<proteinExistence type="inferred from homology"/>
<name>GLNK_ECO57</name>
<protein>
    <recommendedName>
        <fullName evidence="1">Nitrogen regulatory protein GlnK</fullName>
    </recommendedName>
    <alternativeName>
        <fullName evidence="1">Nitrogen regulatory protein P-II 2</fullName>
    </alternativeName>
</protein>
<accession>P0AC57</accession>
<accession>P38504</accession>
<accession>P77118</accession>
<organism>
    <name type="scientific">Escherichia coli O157:H7</name>
    <dbReference type="NCBI Taxonomy" id="83334"/>
    <lineage>
        <taxon>Bacteria</taxon>
        <taxon>Pseudomonadati</taxon>
        <taxon>Pseudomonadota</taxon>
        <taxon>Gammaproteobacteria</taxon>
        <taxon>Enterobacterales</taxon>
        <taxon>Enterobacteriaceae</taxon>
        <taxon>Escherichia</taxon>
    </lineage>
</organism>
<gene>
    <name type="primary">glnK</name>
    <name type="ordered locus">Z0562</name>
    <name type="ordered locus">ECs0504</name>
</gene>
<comment type="function">
    <text evidence="1">Involved in the regulation of nitrogen metabolism. Regulates the activity of its targets by protein-protein interaction in response to the nitrogen status of the cell. Involved in the regulation of the ammonium transporter AmtB so as to optimize ammonium uptake under all growth conditions. In nitrogen-limited conditions, GlnK does not interact with AmtB, which remains active and imports ammonium. When extracellular ammonium increases, GlnK associates tightly with AmtB in the inner membrane, thereby inhibiting the transporter activity.</text>
</comment>
<comment type="activity regulation">
    <text evidence="1">Formation of the GlnK-AmtB complex is influenced by intracellular pools of the effector molecules ATP, ADP, Mg(2+) and 2-oxoglutarate. The GlnK-AmtB interaction is also controlled by the level of intracellular glutamine and the uridylylation status of GlnK.</text>
</comment>
<comment type="subunit">
    <text evidence="1">Homotrimer. In response to elevation of the extracellular ammonium concentration, interacts and forms a complex with AmtB.</text>
</comment>
<comment type="subcellular location">
    <subcellularLocation>
        <location evidence="1">Cytoplasm</location>
    </subcellularLocation>
    <subcellularLocation>
        <location evidence="1">Cell inner membrane</location>
    </subcellularLocation>
    <text evidence="1">During nitrogen limitation, GlnK is predominantly in its fully uridylylated state in the cytoplasmic fraction. In response to nitrogen shock, GlnK is deuridylylated rapidly and associates tightly with AmtB in the inner membrane.</text>
</comment>
<comment type="PTM">
    <text evidence="1">Uridylylated/deuridylylated by GlnD. Fully uridylylated in nitrogen-limited conditions and deuridylylated when extracellular ammonium increases.</text>
</comment>
<comment type="similarity">
    <text evidence="2">Belongs to the P(II) protein family.</text>
</comment>
<feature type="chain" id="PRO_0000139774" description="Nitrogen regulatory protein GlnK">
    <location>
        <begin position="1"/>
        <end position="112"/>
    </location>
</feature>
<feature type="binding site" evidence="1">
    <location>
        <position position="29"/>
    </location>
    <ligand>
        <name>ADP</name>
        <dbReference type="ChEBI" id="CHEBI:456216"/>
    </ligand>
</feature>
<feature type="binding site" evidence="1">
    <location>
        <position position="37"/>
    </location>
    <ligand>
        <name>ATP</name>
        <dbReference type="ChEBI" id="CHEBI:30616"/>
    </ligand>
</feature>
<feature type="binding site" evidence="1">
    <location>
        <begin position="38"/>
        <end position="39"/>
    </location>
    <ligand>
        <name>ADP</name>
        <dbReference type="ChEBI" id="CHEBI:456216"/>
    </ligand>
</feature>
<feature type="binding site" evidence="1">
    <location>
        <position position="64"/>
    </location>
    <ligand>
        <name>ADP</name>
        <dbReference type="ChEBI" id="CHEBI:456216"/>
    </ligand>
</feature>
<feature type="binding site" evidence="1">
    <location>
        <position position="64"/>
    </location>
    <ligand>
        <name>ATP</name>
        <dbReference type="ChEBI" id="CHEBI:30616"/>
    </ligand>
</feature>
<feature type="binding site" evidence="1">
    <location>
        <begin position="87"/>
        <end position="90"/>
    </location>
    <ligand>
        <name>ADP</name>
        <dbReference type="ChEBI" id="CHEBI:456216"/>
    </ligand>
</feature>
<feature type="binding site" evidence="1">
    <location>
        <begin position="87"/>
        <end position="90"/>
    </location>
    <ligand>
        <name>ATP</name>
        <dbReference type="ChEBI" id="CHEBI:30616"/>
    </ligand>
</feature>
<feature type="binding site" evidence="1">
    <location>
        <begin position="101"/>
        <end position="103"/>
    </location>
    <ligand>
        <name>ADP</name>
        <dbReference type="ChEBI" id="CHEBI:456216"/>
    </ligand>
</feature>
<feature type="binding site" evidence="1">
    <location>
        <begin position="101"/>
        <end position="103"/>
    </location>
    <ligand>
        <name>ATP</name>
        <dbReference type="ChEBI" id="CHEBI:30616"/>
    </ligand>
</feature>
<feature type="modified residue" description="O-UMP-tyrosine" evidence="2">
    <location>
        <position position="51"/>
    </location>
</feature>
<dbReference type="EMBL" id="AE005174">
    <property type="protein sequence ID" value="AAG54800.1"/>
    <property type="molecule type" value="Genomic_DNA"/>
</dbReference>
<dbReference type="EMBL" id="BA000007">
    <property type="protein sequence ID" value="BAB33927.1"/>
    <property type="molecule type" value="Genomic_DNA"/>
</dbReference>
<dbReference type="PIR" id="D85542">
    <property type="entry name" value="D85542"/>
</dbReference>
<dbReference type="PIR" id="H90691">
    <property type="entry name" value="H90691"/>
</dbReference>
<dbReference type="RefSeq" id="NP_308531.1">
    <property type="nucleotide sequence ID" value="NC_002695.1"/>
</dbReference>
<dbReference type="RefSeq" id="WP_000780338.1">
    <property type="nucleotide sequence ID" value="NZ_VOAI01000005.1"/>
</dbReference>
<dbReference type="SMR" id="P0AC57"/>
<dbReference type="STRING" id="155864.Z0562"/>
<dbReference type="GeneID" id="914607"/>
<dbReference type="GeneID" id="93777000"/>
<dbReference type="KEGG" id="ece:Z0562"/>
<dbReference type="KEGG" id="ecs:ECs_0504"/>
<dbReference type="PATRIC" id="fig|386585.9.peg.609"/>
<dbReference type="eggNOG" id="COG0347">
    <property type="taxonomic scope" value="Bacteria"/>
</dbReference>
<dbReference type="HOGENOM" id="CLU_082268_0_0_6"/>
<dbReference type="OMA" id="YRGTEHV"/>
<dbReference type="Proteomes" id="UP000000558">
    <property type="component" value="Chromosome"/>
</dbReference>
<dbReference type="Proteomes" id="UP000002519">
    <property type="component" value="Chromosome"/>
</dbReference>
<dbReference type="GO" id="GO:0005829">
    <property type="term" value="C:cytosol"/>
    <property type="evidence" value="ECO:0007669"/>
    <property type="project" value="TreeGrafter"/>
</dbReference>
<dbReference type="GO" id="GO:0005886">
    <property type="term" value="C:plasma membrane"/>
    <property type="evidence" value="ECO:0007669"/>
    <property type="project" value="UniProtKB-SubCell"/>
</dbReference>
<dbReference type="GO" id="GO:0005524">
    <property type="term" value="F:ATP binding"/>
    <property type="evidence" value="ECO:0007669"/>
    <property type="project" value="UniProtKB-KW"/>
</dbReference>
<dbReference type="GO" id="GO:0030234">
    <property type="term" value="F:enzyme regulator activity"/>
    <property type="evidence" value="ECO:0007669"/>
    <property type="project" value="InterPro"/>
</dbReference>
<dbReference type="GO" id="GO:0006808">
    <property type="term" value="P:regulation of nitrogen utilization"/>
    <property type="evidence" value="ECO:0007669"/>
    <property type="project" value="InterPro"/>
</dbReference>
<dbReference type="FunFam" id="3.30.70.120:FF:000001">
    <property type="entry name" value="Nitrogen regulatory protein P-II"/>
    <property type="match status" value="1"/>
</dbReference>
<dbReference type="Gene3D" id="3.30.70.120">
    <property type="match status" value="1"/>
</dbReference>
<dbReference type="InterPro" id="IPR002187">
    <property type="entry name" value="N-reg_PII"/>
</dbReference>
<dbReference type="InterPro" id="IPR011322">
    <property type="entry name" value="N-reg_PII-like_a/b"/>
</dbReference>
<dbReference type="InterPro" id="IPR015867">
    <property type="entry name" value="N-reg_PII/ATP_PRibTrfase_C"/>
</dbReference>
<dbReference type="InterPro" id="IPR017918">
    <property type="entry name" value="N-reg_PII_CS"/>
</dbReference>
<dbReference type="InterPro" id="IPR002332">
    <property type="entry name" value="N-reg_PII_urydylation_site"/>
</dbReference>
<dbReference type="NCBIfam" id="NF007946">
    <property type="entry name" value="PRK10665.1"/>
    <property type="match status" value="1"/>
</dbReference>
<dbReference type="PANTHER" id="PTHR30115:SF20">
    <property type="entry name" value="NITROGEN REGULATORY PROTEIN GLNK"/>
    <property type="match status" value="1"/>
</dbReference>
<dbReference type="PANTHER" id="PTHR30115">
    <property type="entry name" value="NITROGEN REGULATORY PROTEIN P-II"/>
    <property type="match status" value="1"/>
</dbReference>
<dbReference type="Pfam" id="PF00543">
    <property type="entry name" value="P-II"/>
    <property type="match status" value="1"/>
</dbReference>
<dbReference type="PIRSF" id="PIRSF039144">
    <property type="entry name" value="GlnB"/>
    <property type="match status" value="1"/>
</dbReference>
<dbReference type="PRINTS" id="PR00340">
    <property type="entry name" value="PIIGLNB"/>
</dbReference>
<dbReference type="SMART" id="SM00938">
    <property type="entry name" value="P-II"/>
    <property type="match status" value="1"/>
</dbReference>
<dbReference type="SUPFAM" id="SSF54913">
    <property type="entry name" value="GlnB-like"/>
    <property type="match status" value="1"/>
</dbReference>
<dbReference type="PROSITE" id="PS00638">
    <property type="entry name" value="PII_GLNB_CTER"/>
    <property type="match status" value="1"/>
</dbReference>
<dbReference type="PROSITE" id="PS51343">
    <property type="entry name" value="PII_GLNB_DOM"/>
    <property type="match status" value="1"/>
</dbReference>
<dbReference type="PROSITE" id="PS00496">
    <property type="entry name" value="PII_GLNB_UMP"/>
    <property type="match status" value="1"/>
</dbReference>